<dbReference type="EC" id="2.7.11.1"/>
<dbReference type="EMBL" id="CR380954">
    <property type="protein sequence ID" value="CAG59928.1"/>
    <property type="molecule type" value="Genomic_DNA"/>
</dbReference>
<dbReference type="RefSeq" id="XP_446995.1">
    <property type="nucleotide sequence ID" value="XM_446995.1"/>
</dbReference>
<dbReference type="SMR" id="Q6FRZ9"/>
<dbReference type="FunCoup" id="Q6FRZ9">
    <property type="interactions" value="113"/>
</dbReference>
<dbReference type="STRING" id="284593.Q6FRZ9"/>
<dbReference type="EnsemblFungi" id="CAGL0H04609g-T">
    <property type="protein sequence ID" value="CAGL0H04609g-T-p1"/>
    <property type="gene ID" value="CAGL0H04609g"/>
</dbReference>
<dbReference type="KEGG" id="cgr:2888643"/>
<dbReference type="CGD" id="CAL0131518">
    <property type="gene designation" value="CAGL0H04609g"/>
</dbReference>
<dbReference type="VEuPathDB" id="FungiDB:CAGL0H04609g"/>
<dbReference type="eggNOG" id="KOG0892">
    <property type="taxonomic scope" value="Eukaryota"/>
</dbReference>
<dbReference type="HOGENOM" id="CLU_000178_8_1_1"/>
<dbReference type="InParanoid" id="Q6FRZ9"/>
<dbReference type="OMA" id="IYMGWSP"/>
<dbReference type="Proteomes" id="UP000002428">
    <property type="component" value="Chromosome H"/>
</dbReference>
<dbReference type="GO" id="GO:0000781">
    <property type="term" value="C:chromosome, telomeric region"/>
    <property type="evidence" value="ECO:0007669"/>
    <property type="project" value="UniProtKB-SubCell"/>
</dbReference>
<dbReference type="GO" id="GO:0005634">
    <property type="term" value="C:nucleus"/>
    <property type="evidence" value="ECO:0007669"/>
    <property type="project" value="UniProtKB-SubCell"/>
</dbReference>
<dbReference type="GO" id="GO:0005524">
    <property type="term" value="F:ATP binding"/>
    <property type="evidence" value="ECO:0007669"/>
    <property type="project" value="UniProtKB-KW"/>
</dbReference>
<dbReference type="GO" id="GO:0106310">
    <property type="term" value="F:protein serine kinase activity"/>
    <property type="evidence" value="ECO:0007669"/>
    <property type="project" value="RHEA"/>
</dbReference>
<dbReference type="GO" id="GO:0004674">
    <property type="term" value="F:protein serine/threonine kinase activity"/>
    <property type="evidence" value="ECO:0007669"/>
    <property type="project" value="UniProtKB-KW"/>
</dbReference>
<dbReference type="GO" id="GO:0006325">
    <property type="term" value="P:chromatin organization"/>
    <property type="evidence" value="ECO:0007669"/>
    <property type="project" value="UniProtKB-KW"/>
</dbReference>
<dbReference type="GO" id="GO:0006281">
    <property type="term" value="P:DNA repair"/>
    <property type="evidence" value="ECO:0007669"/>
    <property type="project" value="InterPro"/>
</dbReference>
<dbReference type="GO" id="GO:0035556">
    <property type="term" value="P:intracellular signal transduction"/>
    <property type="evidence" value="ECO:0007669"/>
    <property type="project" value="UniProtKB-ARBA"/>
</dbReference>
<dbReference type="CDD" id="cd05171">
    <property type="entry name" value="PIKKc_ATM"/>
    <property type="match status" value="1"/>
</dbReference>
<dbReference type="Gene3D" id="1.10.1070.11">
    <property type="entry name" value="Phosphatidylinositol 3-/4-kinase, catalytic domain"/>
    <property type="match status" value="1"/>
</dbReference>
<dbReference type="Gene3D" id="3.30.1010.10">
    <property type="entry name" value="Phosphatidylinositol 3-kinase Catalytic Subunit, Chain A, domain 4"/>
    <property type="match status" value="1"/>
</dbReference>
<dbReference type="InterPro" id="IPR038980">
    <property type="entry name" value="ATM_plant"/>
</dbReference>
<dbReference type="InterPro" id="IPR003152">
    <property type="entry name" value="FATC_dom"/>
</dbReference>
<dbReference type="InterPro" id="IPR011009">
    <property type="entry name" value="Kinase-like_dom_sf"/>
</dbReference>
<dbReference type="InterPro" id="IPR000403">
    <property type="entry name" value="PI3/4_kinase_cat_dom"/>
</dbReference>
<dbReference type="InterPro" id="IPR036940">
    <property type="entry name" value="PI3/4_kinase_cat_sf"/>
</dbReference>
<dbReference type="InterPro" id="IPR018936">
    <property type="entry name" value="PI3/4_kinase_CS"/>
</dbReference>
<dbReference type="InterPro" id="IPR014009">
    <property type="entry name" value="PIK_FAT"/>
</dbReference>
<dbReference type="InterPro" id="IPR044107">
    <property type="entry name" value="PIKKc_ATM"/>
</dbReference>
<dbReference type="InterPro" id="IPR021668">
    <property type="entry name" value="TAN"/>
</dbReference>
<dbReference type="PANTHER" id="PTHR37079">
    <property type="entry name" value="SERINE/THREONINE-PROTEIN KINASE ATM"/>
    <property type="match status" value="1"/>
</dbReference>
<dbReference type="PANTHER" id="PTHR37079:SF4">
    <property type="entry name" value="SERINE_THREONINE-PROTEIN KINASE ATM"/>
    <property type="match status" value="1"/>
</dbReference>
<dbReference type="Pfam" id="PF02260">
    <property type="entry name" value="FATC"/>
    <property type="match status" value="1"/>
</dbReference>
<dbReference type="Pfam" id="PF00454">
    <property type="entry name" value="PI3_PI4_kinase"/>
    <property type="match status" value="1"/>
</dbReference>
<dbReference type="Pfam" id="PF11640">
    <property type="entry name" value="TAN"/>
    <property type="match status" value="1"/>
</dbReference>
<dbReference type="SMART" id="SM01343">
    <property type="entry name" value="FATC"/>
    <property type="match status" value="1"/>
</dbReference>
<dbReference type="SMART" id="SM00146">
    <property type="entry name" value="PI3Kc"/>
    <property type="match status" value="1"/>
</dbReference>
<dbReference type="SMART" id="SM01342">
    <property type="entry name" value="TAN"/>
    <property type="match status" value="1"/>
</dbReference>
<dbReference type="SUPFAM" id="SSF56112">
    <property type="entry name" value="Protein kinase-like (PK-like)"/>
    <property type="match status" value="1"/>
</dbReference>
<dbReference type="PROSITE" id="PS51189">
    <property type="entry name" value="FAT"/>
    <property type="match status" value="1"/>
</dbReference>
<dbReference type="PROSITE" id="PS51190">
    <property type="entry name" value="FATC"/>
    <property type="match status" value="1"/>
</dbReference>
<dbReference type="PROSITE" id="PS00915">
    <property type="entry name" value="PI3_4_KINASE_1"/>
    <property type="match status" value="1"/>
</dbReference>
<dbReference type="PROSITE" id="PS00916">
    <property type="entry name" value="PI3_4_KINASE_2"/>
    <property type="match status" value="1"/>
</dbReference>
<dbReference type="PROSITE" id="PS50290">
    <property type="entry name" value="PI3_4_KINASE_3"/>
    <property type="match status" value="1"/>
</dbReference>
<sequence>MENYQIRTLQDQLTSSKLRDRNAGLQELQSILKDNPGFIANEQINGLLNTLLSLLENEAGKYIDSIEDDTDSRQRKENISISRFSNITYTLRLFIETVIEKFKLSHLKLTISAVKDLFYNDARIIVPVINDVTYCILAIVKSEIFGNKIGPSQWLDVAEYTLWLIKITSSNRSNIRALTNSLDTFYVLLIKGSISLSKVAKEALVIITNLIVFEKGETATTNVLLSISSNLVARLHCQHYYDTTSLIIECWKLYTRIGKTNNFNLLNDISKIDIFGGGLLQNQIPIMPGQEIMGSRISHSVVLSTLQDYIPMKVKEMLDVDHSLTIGIYDDLNNSNMDLTYNTFAKTHCKDLAWLRLFGLYDTLCLYYRLSNQERENNATQILKKIKYEGSLQSNLNQCNSLLDYSQSLLESGDPLIQLLGCKLFFLLNLDHPIACNTELIDRLCINTNNISLTSWHLACIFTNISYDLWNFDETLYLKVLKYITPLLSTSEVNIMACLIFNKLLHSLTREPIDELSSLVNSIIASPDSVLPIEISSVTCEAWQHIFVFAINNLKVDNSLLLDSFSKWINHNITQTIHIEHLKLIFEFFLWSLDVVVGSTSHNKQHNTYNLLNLKTSDSALAIWYFYENQRKFLTQTIQTSSQASVNTKSMVCPITSTNIKIQWLLNIIDNYFTTSKNHSLKYTFAISLIYFINFIEKSGKVYTYLNQELNQRLNSILIELDFLSFDKWEEGKQFIEIICNQETFFNRLHNDVVFKDNILLSLINLFEKEYSHFLNADNGSTAKTGNDIYLNQRSILRFRTDIKLMTQFFTCVDSNVPGKIGIYLDRLLLYSMGPNESLVLDELLSWVTNPSNNQYYEVHSLEKLCQFLAKSLLNSKYQLSDFSMIRLGLFLTSTIELWVNVKYNILNSDCNDFLIWITNNLVQNNFGETGTFVVLIRLFISVLKHNSTVNSSCAIKTQDLYSMLIFCMRNVAYSTLGNIVDELKAYMSKKSHKNRKTILDDLVELFEPMPESVEKAASSCFVLFGLLDCNDTNFVYTLDIFSNYGNIPHISFFLKKAVKNYVNNYYQGNKIQLLNVHILEVIRQWTKRNDTDRQLYFNSVIGSLFGFGSIQEFERQYNREICALIFSRSDSESLERNFFSDRNTSKCEMLRRSLYLLIPLSYYDNGVGDMVFNKLKDSFRGQLESVLSSNFIIVMRYALKLCDCSDYTSVLNEMQRPNQSSSLLELFMDSEMKNAINRMNIYITVHSVIKIFKNCGRSRQTLLLDLRTLILWIISDIQKSESSWEQNNHLRQLQLLVFLYEDTFLQSVLHIELMNWLSYLLKIENIEADVFLLLNCLLSLIKPNSLDKPDSLTLFFLNVLHFYVRNKECLKIGDEDMNMLSNNLSTVNSIALKLLTNGQVTDLIYNQVGDLTSQMYFAEEVELFALLMTFAPPMPDYVSHKMNKKFIEYVYKSNNLIDIDNFSLWFSDYSTQYSSLILELEENSSFCEKDGFGIDDMEIVYDFSDSAVSAMYSVLFRSLISIKPTIGFKSFALSNIICHLISINILKDKDLLSKFLRATKMKIAFSAKEIDETIIEHFGKSNCGCVISEHYLESEFFDTNIPYKDWLVKLCMFFISQISLNSKEIQWFIPLCYESMDFCKQNVCIFFLAAFSFDHRRMSSTWKHIFSRLNDLTMASDCLAKLTLLLSFIRLIRSGALQGRKEYSNLYQKIEFKGVIDAALKIKDSKFALQLFEEAYMCENGDYDVALLTSIYEQLDDVDMLYALPTPISLNGFIKNANRLSPHSLKALQLNGAYFDANFNHLVDNGSHQLVNTLTGMGFNALADIADLRTSCDNPADAYLRCLQLDKWDLPKPKAIDCKIVSFYNTAYDLRNTNIEFVDLLQNAEIQLYKAKANFSSKLEWFETIREYVKTKRAIISLKTDTDISRFKIDHVINPDRYLENALISDIKINWQFRYLMLKIYVEREKFANEAMKCIPILELIHQTELSVDFHIQQTSLSRILSMEAAMKRFHIADTNLVEQLSRHVSYVTALALREFGETKAPLTILSKLLSDKSYKLNYNTFVSDDEVRAQLIWDSYQAKVKSGIQIFENDVEHWDVSINNIRSAPDTIYKVANFLNLEISRLNGSDQLKEKQKSYRRTRQELKDIESVVKSSNLSNEELLVGQKHYHNLKTHMENDRLAIENICLTRKKLIKRALDYYVQILILTNNYDYDVLDRFCGLWFENDDDDDINTDLTSKLSQIPTWKFLPWVNQFTSKLSLLKSKFQKQLWYIMKRLLYKLPFETGYAVINLQLYEKYSDKLDEKISEKIKAANLIFDQLQNSQISVKEGEYLRTIQEFCYATLEIAELKVKGKNAQISLETLNIGRYWITELPKKNLPLPTVTRTINSSQYTLDSSRNIVKVIGNITITSTGLSLPKVMTLLLSDGSRHKVVIKYGSDDLRQDAIMEQVFQQVNKIFGKDVEMRRSDLHMRTYNVVPLGPKAGLIEFVNNSLSLHSILTDIHKDDNYSWLEARRSMKDVQSKSDKERILTYLDITKKISPKFRNFFFNSFIDANGWICAKRKYTKGVATSSMVGYILGLGDRHLNNILIDTTTGEPIHIDLGIAFDQGRLLKIPELVPFRLTRDIIDGFGITGVEGIFRRTCEQVLNVLSRDSEKVMCVLNILKWDPLYSWAVSPFKKHKYMYDDNLEGHMTTATNNSKVIERKLTPKLDSDENQQSYRALKGVQEKLDRNGLTIEATVEKLIQEAVDESNLALIFNGWSPFY</sequence>
<gene>
    <name type="primary">TEL1</name>
    <name type="ordered locus">CAGL0H04609g</name>
</gene>
<keyword id="KW-0067">ATP-binding</keyword>
<keyword id="KW-0156">Chromatin regulator</keyword>
<keyword id="KW-0158">Chromosome</keyword>
<keyword id="KW-0227">DNA damage</keyword>
<keyword id="KW-0418">Kinase</keyword>
<keyword id="KW-0547">Nucleotide-binding</keyword>
<keyword id="KW-0539">Nucleus</keyword>
<keyword id="KW-1185">Reference proteome</keyword>
<keyword id="KW-0723">Serine/threonine-protein kinase</keyword>
<keyword id="KW-0779">Telomere</keyword>
<keyword id="KW-0808">Transferase</keyword>
<protein>
    <recommendedName>
        <fullName>Serine/threonine-protein kinase TEL1</fullName>
        <ecNumber>2.7.11.1</ecNumber>
    </recommendedName>
    <alternativeName>
        <fullName>ATM homolog</fullName>
    </alternativeName>
    <alternativeName>
        <fullName>DNA-damage checkpoint kinase TEL1</fullName>
    </alternativeName>
    <alternativeName>
        <fullName>Telomere length regulation protein 1</fullName>
    </alternativeName>
</protein>
<feature type="chain" id="PRO_0000227699" description="Serine/threonine-protein kinase TEL1">
    <location>
        <begin position="1"/>
        <end position="2763"/>
    </location>
</feature>
<feature type="domain" description="FAT" evidence="3">
    <location>
        <begin position="1715"/>
        <end position="2294"/>
    </location>
</feature>
<feature type="domain" description="PI3K/PI4K catalytic" evidence="2">
    <location>
        <begin position="2403"/>
        <end position="2712"/>
    </location>
</feature>
<feature type="domain" description="FATC" evidence="3 4">
    <location>
        <begin position="2731"/>
        <end position="2763"/>
    </location>
</feature>
<feature type="region of interest" description="G-loop" evidence="2">
    <location>
        <begin position="2409"/>
        <end position="2415"/>
    </location>
</feature>
<feature type="region of interest" description="Catalytic loop" evidence="2">
    <location>
        <begin position="2578"/>
        <end position="2586"/>
    </location>
</feature>
<feature type="region of interest" description="Activation loop" evidence="2">
    <location>
        <begin position="2598"/>
        <end position="2622"/>
    </location>
</feature>
<reference key="1">
    <citation type="journal article" date="2004" name="Nature">
        <title>Genome evolution in yeasts.</title>
        <authorList>
            <person name="Dujon B."/>
            <person name="Sherman D."/>
            <person name="Fischer G."/>
            <person name="Durrens P."/>
            <person name="Casaregola S."/>
            <person name="Lafontaine I."/>
            <person name="de Montigny J."/>
            <person name="Marck C."/>
            <person name="Neuveglise C."/>
            <person name="Talla E."/>
            <person name="Goffard N."/>
            <person name="Frangeul L."/>
            <person name="Aigle M."/>
            <person name="Anthouard V."/>
            <person name="Babour A."/>
            <person name="Barbe V."/>
            <person name="Barnay S."/>
            <person name="Blanchin S."/>
            <person name="Beckerich J.-M."/>
            <person name="Beyne E."/>
            <person name="Bleykasten C."/>
            <person name="Boisrame A."/>
            <person name="Boyer J."/>
            <person name="Cattolico L."/>
            <person name="Confanioleri F."/>
            <person name="de Daruvar A."/>
            <person name="Despons L."/>
            <person name="Fabre E."/>
            <person name="Fairhead C."/>
            <person name="Ferry-Dumazet H."/>
            <person name="Groppi A."/>
            <person name="Hantraye F."/>
            <person name="Hennequin C."/>
            <person name="Jauniaux N."/>
            <person name="Joyet P."/>
            <person name="Kachouri R."/>
            <person name="Kerrest A."/>
            <person name="Koszul R."/>
            <person name="Lemaire M."/>
            <person name="Lesur I."/>
            <person name="Ma L."/>
            <person name="Muller H."/>
            <person name="Nicaud J.-M."/>
            <person name="Nikolski M."/>
            <person name="Oztas S."/>
            <person name="Ozier-Kalogeropoulos O."/>
            <person name="Pellenz S."/>
            <person name="Potier S."/>
            <person name="Richard G.-F."/>
            <person name="Straub M.-L."/>
            <person name="Suleau A."/>
            <person name="Swennen D."/>
            <person name="Tekaia F."/>
            <person name="Wesolowski-Louvel M."/>
            <person name="Westhof E."/>
            <person name="Wirth B."/>
            <person name="Zeniou-Meyer M."/>
            <person name="Zivanovic Y."/>
            <person name="Bolotin-Fukuhara M."/>
            <person name="Thierry A."/>
            <person name="Bouchier C."/>
            <person name="Caudron B."/>
            <person name="Scarpelli C."/>
            <person name="Gaillardin C."/>
            <person name="Weissenbach J."/>
            <person name="Wincker P."/>
            <person name="Souciet J.-L."/>
        </authorList>
    </citation>
    <scope>NUCLEOTIDE SEQUENCE [LARGE SCALE GENOMIC DNA]</scope>
    <source>
        <strain>ATCC 2001 / BCRC 20586 / JCM 3761 / NBRC 0622 / NRRL Y-65 / CBS 138</strain>
    </source>
</reference>
<name>ATM_CANGA</name>
<proteinExistence type="inferred from homology"/>
<accession>Q6FRZ9</accession>
<organism>
    <name type="scientific">Candida glabrata (strain ATCC 2001 / BCRC 20586 / JCM 3761 / NBRC 0622 / NRRL Y-65 / CBS 138)</name>
    <name type="common">Yeast</name>
    <name type="synonym">Nakaseomyces glabratus</name>
    <dbReference type="NCBI Taxonomy" id="284593"/>
    <lineage>
        <taxon>Eukaryota</taxon>
        <taxon>Fungi</taxon>
        <taxon>Dikarya</taxon>
        <taxon>Ascomycota</taxon>
        <taxon>Saccharomycotina</taxon>
        <taxon>Saccharomycetes</taxon>
        <taxon>Saccharomycetales</taxon>
        <taxon>Saccharomycetaceae</taxon>
        <taxon>Nakaseomyces</taxon>
    </lineage>
</organism>
<comment type="function">
    <text evidence="1">Serine/threonine protein kinase which activates checkpoint signaling upon genotoxic stresses such as ionizing radiation (IR), ultraviolet light (UV), or DNA replication stalling, thereby acting as a DNA damage sensor. Recognizes the substrate consensus sequence [ST]-Q. Phosphorylates histone H2A to form H2AS128ph (gamma-H2A) at sites of DNA damage, involved in the regulation of DNA damage response mechanism. Required for the control of telomere length and genome stability (By similarity).</text>
</comment>
<comment type="catalytic activity">
    <reaction>
        <text>L-seryl-[protein] + ATP = O-phospho-L-seryl-[protein] + ADP + H(+)</text>
        <dbReference type="Rhea" id="RHEA:17989"/>
        <dbReference type="Rhea" id="RHEA-COMP:9863"/>
        <dbReference type="Rhea" id="RHEA-COMP:11604"/>
        <dbReference type="ChEBI" id="CHEBI:15378"/>
        <dbReference type="ChEBI" id="CHEBI:29999"/>
        <dbReference type="ChEBI" id="CHEBI:30616"/>
        <dbReference type="ChEBI" id="CHEBI:83421"/>
        <dbReference type="ChEBI" id="CHEBI:456216"/>
        <dbReference type="EC" id="2.7.11.1"/>
    </reaction>
</comment>
<comment type="catalytic activity">
    <reaction>
        <text>L-threonyl-[protein] + ATP = O-phospho-L-threonyl-[protein] + ADP + H(+)</text>
        <dbReference type="Rhea" id="RHEA:46608"/>
        <dbReference type="Rhea" id="RHEA-COMP:11060"/>
        <dbReference type="Rhea" id="RHEA-COMP:11605"/>
        <dbReference type="ChEBI" id="CHEBI:15378"/>
        <dbReference type="ChEBI" id="CHEBI:30013"/>
        <dbReference type="ChEBI" id="CHEBI:30616"/>
        <dbReference type="ChEBI" id="CHEBI:61977"/>
        <dbReference type="ChEBI" id="CHEBI:456216"/>
        <dbReference type="EC" id="2.7.11.1"/>
    </reaction>
</comment>
<comment type="subunit">
    <text evidence="1">Associates with DNA double-strand breaks.</text>
</comment>
<comment type="subcellular location">
    <subcellularLocation>
        <location evidence="1">Nucleus</location>
    </subcellularLocation>
    <subcellularLocation>
        <location evidence="1">Chromosome</location>
        <location evidence="1">Telomere</location>
    </subcellularLocation>
    <text evidence="1">Localizes to nuclear DNA repair foci with other DNA repair proteins in response to DNA double strand breaks.</text>
</comment>
<comment type="similarity">
    <text evidence="5">Belongs to the PI3/PI4-kinase family. ATM subfamily.</text>
</comment>
<evidence type="ECO:0000250" key="1"/>
<evidence type="ECO:0000255" key="2">
    <source>
        <dbReference type="PROSITE-ProRule" id="PRU00269"/>
    </source>
</evidence>
<evidence type="ECO:0000255" key="3">
    <source>
        <dbReference type="PROSITE-ProRule" id="PRU00534"/>
    </source>
</evidence>
<evidence type="ECO:0000255" key="4">
    <source>
        <dbReference type="PROSITE-ProRule" id="PRU00535"/>
    </source>
</evidence>
<evidence type="ECO:0000305" key="5"/>